<accession>P31896</accession>
<comment type="function">
    <text evidence="2">Allows growth in a CO-dependent manner in the dark. CODH oxidizes carbon monoxide coupled, via CooF, to the reduction of a hydrogen cation by a hydrogenase (possibly CooH).</text>
</comment>
<comment type="catalytic activity">
    <reaction evidence="2">
        <text>CO + 2 oxidized [2Fe-2S]-[ferredoxin] + H2O = 2 reduced [2Fe-2S]-[ferredoxin] + CO2 + 2 H(+)</text>
        <dbReference type="Rhea" id="RHEA:21040"/>
        <dbReference type="Rhea" id="RHEA-COMP:10000"/>
        <dbReference type="Rhea" id="RHEA-COMP:10001"/>
        <dbReference type="ChEBI" id="CHEBI:15377"/>
        <dbReference type="ChEBI" id="CHEBI:15378"/>
        <dbReference type="ChEBI" id="CHEBI:16526"/>
        <dbReference type="ChEBI" id="CHEBI:17245"/>
        <dbReference type="ChEBI" id="CHEBI:33737"/>
        <dbReference type="ChEBI" id="CHEBI:33738"/>
        <dbReference type="EC" id="1.2.7.4"/>
    </reaction>
</comment>
<comment type="cofactor">
    <cofactor evidence="3">
        <name>[4Fe-4S] cluster</name>
        <dbReference type="ChEBI" id="CHEBI:49883"/>
    </cofactor>
    <text evidence="3">Binds 3 [4Fe-4S] clusters per homodimer.</text>
</comment>
<comment type="cofactor">
    <cofactor evidence="3">
        <name>[Ni-4Fe-4S] cluster</name>
        <dbReference type="ChEBI" id="CHEBI:47739"/>
    </cofactor>
    <text evidence="3">Binds 2 [Ni-4Fe-4S] clusters per homodimer.</text>
</comment>
<comment type="subunit">
    <text evidence="3">Homodimer.</text>
</comment>
<comment type="subcellular location">
    <subcellularLocation>
        <location>Cytoplasm</location>
    </subcellularLocation>
    <subcellularLocation>
        <location>Cell inner membrane</location>
        <topology>Peripheral membrane protein</topology>
        <orientation>Cytoplasmic side</orientation>
    </subcellularLocation>
    <text evidence="1">Loosely attached to the inner membrane, probably via CooF.</text>
</comment>
<comment type="induction">
    <text>By carbon monoxide; under anaerobic conditions.</text>
</comment>
<comment type="domain">
    <text evidence="2">Cluster B is an all-cysteinyl-liganded 4Fe-4S cluster; cluster C is a mixed Ni-Fe-S cluster which is the active site of CO oxidation. Cluster D is also an all-cysteinyl-liganded 4Fe-4S cluster that bridges the two subunits of the CODH dimer.</text>
</comment>
<comment type="miscellaneous">
    <text>Methyl viologen can act as acceptor. Inactivated by O(2).</text>
</comment>
<comment type="similarity">
    <text evidence="7">Belongs to the Ni-containing carbon monoxide dehydrogenase family.</text>
</comment>
<reference key="1">
    <citation type="journal article" date="1992" name="J. Bacteriol.">
        <title>Genetic and physiological characterization of the Rhodospirillum rubrum carbon monoxide dehydrogenase system.</title>
        <authorList>
            <person name="Kerby R.L."/>
            <person name="Hong S.S."/>
            <person name="Ensign S.A."/>
            <person name="Coppoc L.J."/>
            <person name="Ludden P.W."/>
            <person name="Roberts G.P."/>
        </authorList>
    </citation>
    <scope>NUCLEOTIDE SEQUENCE [GENOMIC DNA]</scope>
    <scope>PROTEIN SEQUENCE OF 2-26</scope>
    <source>
        <strain>UR1</strain>
    </source>
</reference>
<reference key="2">
    <citation type="journal article" date="1996" name="J. Bacteriol.">
        <title>Characterization of the CO-induced, CO-tolerant hydrogenase from Rhodospirillum rubrum and the gene encoding the large subunit of the enzyme.</title>
        <authorList>
            <person name="Fox J.D."/>
            <person name="Kerby R.L."/>
            <person name="Roberts G.P."/>
            <person name="Ludden P.W."/>
        </authorList>
    </citation>
    <scope>NUCLEOTIDE SEQUENCE [GENOMIC DNA]</scope>
    <source>
        <strain>UR1</strain>
    </source>
</reference>
<reference key="3">
    <citation type="journal article" date="1998" name="J. Biol. Chem.">
        <title>Substitution of valine for histidine 265 in carbon monoxide dehydrogenase from Rhodospirillum rubrum affects activity and spectroscopic states.</title>
        <authorList>
            <person name="Spangler N.J."/>
            <person name="Meyers M.R."/>
            <person name="Gierke K.L."/>
            <person name="Kerby R.L."/>
            <person name="Roberts G.P."/>
            <person name="Ludden P.W."/>
        </authorList>
    </citation>
    <scope>MUTAGENESIS OF HIS-265</scope>
</reference>
<reference key="4">
    <citation type="journal article" date="2002" name="J. Bacteriol.">
        <title>Converting the NiFeS carbon monoxide dehydrogenase to a hydrogenase and a hydroxylamine reductase.</title>
        <authorList>
            <person name="Heo J."/>
            <person name="Wolfe M.T."/>
            <person name="Staples C.R."/>
            <person name="Ludden P.W."/>
        </authorList>
    </citation>
    <scope>MUTAGENESIS OF CYS-531</scope>
</reference>
<reference key="5">
    <citation type="journal article" date="1995" name="Annu. Rev. Microbiol.">
        <title>CO dehydrogenase.</title>
        <authorList>
            <person name="Ferry J.G."/>
        </authorList>
    </citation>
    <scope>REVIEW</scope>
</reference>
<reference key="6">
    <citation type="journal article" date="2001" name="Proc. Natl. Acad. Sci. U.S.A.">
        <title>Life on carbon monoxide: X-ray structure of Rhodospirillum rubrum Ni-Fe-S carbon monoxide dehydrogenase.</title>
        <authorList>
            <person name="Drennan C.L."/>
            <person name="Heo J."/>
            <person name="Sintchak M.D."/>
            <person name="Schreiter E."/>
            <person name="Ludden P.W."/>
        </authorList>
    </citation>
    <scope>X-RAY CRYSTALLOGRAPHY (2.80 ANGSTROMS) IN COMPLEX WITH NICKEL-IRON-SULFUR CLUSTER (NI-4FE-4S) AND IRON-SULFUR (4FE-4S)</scope>
    <scope>COFACTOR</scope>
    <scope>SUBUNIT</scope>
</reference>
<dbReference type="EC" id="1.2.7.4" evidence="2"/>
<dbReference type="EMBL" id="U65510">
    <property type="protein sequence ID" value="AAC45123.1"/>
    <property type="molecule type" value="Genomic_DNA"/>
</dbReference>
<dbReference type="PIR" id="C42957">
    <property type="entry name" value="C42957"/>
</dbReference>
<dbReference type="RefSeq" id="WP_011389181.1">
    <property type="nucleotide sequence ID" value="NZ_DAMDTZ010000025.1"/>
</dbReference>
<dbReference type="PDB" id="1JQK">
    <property type="method" value="X-ray"/>
    <property type="resolution" value="2.80 A"/>
    <property type="chains" value="A/B/C/D/E/F=1-639"/>
</dbReference>
<dbReference type="PDB" id="9GYB">
    <property type="method" value="X-ray"/>
    <property type="resolution" value="2.90 A"/>
    <property type="chains" value="A/B/C/D/E/F=1-639"/>
</dbReference>
<dbReference type="PDBsum" id="1JQK"/>
<dbReference type="PDBsum" id="9GYB"/>
<dbReference type="SMR" id="P31896"/>
<dbReference type="OMA" id="ECMHRTH"/>
<dbReference type="BioCyc" id="MetaCyc:MONOMER-16431"/>
<dbReference type="EvolutionaryTrace" id="P31896"/>
<dbReference type="GO" id="GO:0005737">
    <property type="term" value="C:cytoplasm"/>
    <property type="evidence" value="ECO:0000314"/>
    <property type="project" value="CAFA"/>
</dbReference>
<dbReference type="GO" id="GO:0005886">
    <property type="term" value="C:plasma membrane"/>
    <property type="evidence" value="ECO:0007669"/>
    <property type="project" value="UniProtKB-SubCell"/>
</dbReference>
<dbReference type="GO" id="GO:0032991">
    <property type="term" value="C:protein-containing complex"/>
    <property type="evidence" value="ECO:0000314"/>
    <property type="project" value="CAFA"/>
</dbReference>
<dbReference type="GO" id="GO:0051538">
    <property type="term" value="F:3 iron, 4 sulfur cluster binding"/>
    <property type="evidence" value="ECO:0000314"/>
    <property type="project" value="CAFA"/>
</dbReference>
<dbReference type="GO" id="GO:0051539">
    <property type="term" value="F:4 iron, 4 sulfur cluster binding"/>
    <property type="evidence" value="ECO:0000314"/>
    <property type="project" value="CAFA"/>
</dbReference>
<dbReference type="GO" id="GO:0043885">
    <property type="term" value="F:anaerobic carbon-monoxide dehydrogenase activity"/>
    <property type="evidence" value="ECO:0007669"/>
    <property type="project" value="UniProtKB-EC"/>
</dbReference>
<dbReference type="GO" id="GO:0008198">
    <property type="term" value="F:ferrous iron binding"/>
    <property type="evidence" value="ECO:0000314"/>
    <property type="project" value="CAFA"/>
</dbReference>
<dbReference type="GO" id="GO:0050418">
    <property type="term" value="F:hydroxylamine reductase activity"/>
    <property type="evidence" value="ECO:0007669"/>
    <property type="project" value="TreeGrafter"/>
</dbReference>
<dbReference type="GO" id="GO:0016151">
    <property type="term" value="F:nickel cation binding"/>
    <property type="evidence" value="ECO:0000314"/>
    <property type="project" value="CAFA"/>
</dbReference>
<dbReference type="GO" id="GO:0016491">
    <property type="term" value="F:oxidoreductase activity"/>
    <property type="evidence" value="ECO:0000314"/>
    <property type="project" value="CACAO"/>
</dbReference>
<dbReference type="GO" id="GO:0004601">
    <property type="term" value="F:peroxidase activity"/>
    <property type="evidence" value="ECO:0007669"/>
    <property type="project" value="TreeGrafter"/>
</dbReference>
<dbReference type="GO" id="GO:0042803">
    <property type="term" value="F:protein homodimerization activity"/>
    <property type="evidence" value="ECO:0000314"/>
    <property type="project" value="CAFA"/>
</dbReference>
<dbReference type="GO" id="GO:0006091">
    <property type="term" value="P:generation of precursor metabolites and energy"/>
    <property type="evidence" value="ECO:0007669"/>
    <property type="project" value="InterPro"/>
</dbReference>
<dbReference type="GO" id="GO:0042542">
    <property type="term" value="P:response to hydrogen peroxide"/>
    <property type="evidence" value="ECO:0007669"/>
    <property type="project" value="TreeGrafter"/>
</dbReference>
<dbReference type="CDD" id="cd01915">
    <property type="entry name" value="CODH"/>
    <property type="match status" value="1"/>
</dbReference>
<dbReference type="DisProt" id="DP00239"/>
<dbReference type="FunFam" id="1.20.1270.30:FF:000001">
    <property type="entry name" value="Carbon monoxide dehydrogenase"/>
    <property type="match status" value="1"/>
</dbReference>
<dbReference type="FunFam" id="3.40.50.2030:FF:000005">
    <property type="entry name" value="Carbon monoxide dehydrogenase"/>
    <property type="match status" value="1"/>
</dbReference>
<dbReference type="Gene3D" id="1.20.1270.30">
    <property type="match status" value="1"/>
</dbReference>
<dbReference type="Gene3D" id="3.40.50.2030">
    <property type="match status" value="2"/>
</dbReference>
<dbReference type="InterPro" id="IPR016101">
    <property type="entry name" value="CO_DH_a-bundle"/>
</dbReference>
<dbReference type="InterPro" id="IPR010047">
    <property type="entry name" value="CODH"/>
</dbReference>
<dbReference type="InterPro" id="IPR004137">
    <property type="entry name" value="HCP/CODH"/>
</dbReference>
<dbReference type="InterPro" id="IPR016099">
    <property type="entry name" value="Prismane-like_a/b-sand"/>
</dbReference>
<dbReference type="InterPro" id="IPR011254">
    <property type="entry name" value="Prismane-like_sf"/>
</dbReference>
<dbReference type="NCBIfam" id="TIGR01702">
    <property type="entry name" value="CO_DH_cata"/>
    <property type="match status" value="1"/>
</dbReference>
<dbReference type="PANTHER" id="PTHR30109:SF4">
    <property type="entry name" value="CARBON MONOXIDE DEHYDROGENASE"/>
    <property type="match status" value="1"/>
</dbReference>
<dbReference type="PANTHER" id="PTHR30109">
    <property type="entry name" value="HYDROXYLAMINE REDUCTASE"/>
    <property type="match status" value="1"/>
</dbReference>
<dbReference type="Pfam" id="PF03063">
    <property type="entry name" value="Prismane"/>
    <property type="match status" value="1"/>
</dbReference>
<dbReference type="PIRSF" id="PIRSF005023">
    <property type="entry name" value="CODH"/>
    <property type="match status" value="1"/>
</dbReference>
<dbReference type="SUPFAM" id="SSF56821">
    <property type="entry name" value="Prismane protein-like"/>
    <property type="match status" value="1"/>
</dbReference>
<sequence>MTHHDCAHCSSDACATEMLNLAEANSIETAWHRYEKQQPQCGFGSAGLCCRICLKGPCRIDPFGEGPKYGVCGADRDTIVARHLVRMIAAGTAAHSEHGRHIALAMQHISQGELHDYSIRDEAKLYAIAKTLGVATEGRGLLAIVGDLAAITLGDFQNQDYDKPCAWLAASLTPRRVKRLGDLGLLPHNIDASVAQTMSRTHVGCDADPTNLILGGLRVAMADLDGSMLATELSDALFGTPQPVVSAANLGVMKRGAVNIAVNGHNPMLSDIICDVAADLRDEAIAAGAAEGINIIGICCTGHEVMMRHGVPLATNYLSQELPILTGALEAMVVDVQCIMPSLPRIAECFHTQIITTDKHNKISGATHVPFDEHKAVETAKTIIRMAIAAFGRRDPNRVAIPAFKQKSIVGFSAEAVVAALAKVNADDPLKPLVDNVVNGNIQGIVLFVGCNTTKVQQDSAYVDLAKSLAKRNVLVLATGCAAGAFAKAGLMTSEATTQYAGEGLKGVLSAIGTAAGLGGPLPLVMHMGSCVDNSRAVALATALANKLGVDLSDLPLVASAPECMSEKALAIGSWAVTIGLPTHVGSVPPVIGSQIVTKLVTETAKDLVGGYFIVDTDPKSAGDKLYAAIQERRAGLGL</sequence>
<evidence type="ECO:0000250" key="1"/>
<evidence type="ECO:0000250" key="2">
    <source>
        <dbReference type="UniProtKB" id="Q9F8A8"/>
    </source>
</evidence>
<evidence type="ECO:0000269" key="3">
    <source>
    </source>
</evidence>
<evidence type="ECO:0000269" key="4">
    <source>
    </source>
</evidence>
<evidence type="ECO:0000269" key="5">
    <source>
    </source>
</evidence>
<evidence type="ECO:0000269" key="6">
    <source>
    </source>
</evidence>
<evidence type="ECO:0000305" key="7"/>
<evidence type="ECO:0007829" key="8">
    <source>
        <dbReference type="PDB" id="1JQK"/>
    </source>
</evidence>
<keyword id="KW-0002">3D-structure</keyword>
<keyword id="KW-0004">4Fe-4S</keyword>
<keyword id="KW-0997">Cell inner membrane</keyword>
<keyword id="KW-1003">Cell membrane</keyword>
<keyword id="KW-0963">Cytoplasm</keyword>
<keyword id="KW-0903">Direct protein sequencing</keyword>
<keyword id="KW-0408">Iron</keyword>
<keyword id="KW-0411">Iron-sulfur</keyword>
<keyword id="KW-0472">Membrane</keyword>
<keyword id="KW-0479">Metal-binding</keyword>
<keyword id="KW-0533">Nickel</keyword>
<keyword id="KW-0560">Oxidoreductase</keyword>
<gene>
    <name type="primary">cooS</name>
</gene>
<name>COOS_RHORU</name>
<protein>
    <recommendedName>
        <fullName>Carbon monoxide dehydrogenase</fullName>
        <shortName>CODH</shortName>
        <ecNumber evidence="2">1.2.7.4</ecNumber>
    </recommendedName>
</protein>
<organism>
    <name type="scientific">Rhodospirillum rubrum</name>
    <dbReference type="NCBI Taxonomy" id="1085"/>
    <lineage>
        <taxon>Bacteria</taxon>
        <taxon>Pseudomonadati</taxon>
        <taxon>Pseudomonadota</taxon>
        <taxon>Alphaproteobacteria</taxon>
        <taxon>Rhodospirillales</taxon>
        <taxon>Rhodospirillaceae</taxon>
        <taxon>Rhodospirillum</taxon>
    </lineage>
</organism>
<feature type="initiator methionine" description="Removed" evidence="5">
    <location>
        <position position="1"/>
    </location>
</feature>
<feature type="chain" id="PRO_0000157139" description="Carbon monoxide dehydrogenase">
    <location>
        <begin position="2"/>
        <end position="639"/>
    </location>
</feature>
<feature type="binding site" evidence="3">
    <location>
        <position position="41"/>
    </location>
    <ligand>
        <name>[4Fe-4S] cluster</name>
        <dbReference type="ChEBI" id="CHEBI:49883"/>
        <label>1</label>
        <note>ligand shared between dimeric partners</note>
    </ligand>
</feature>
<feature type="binding site" evidence="3">
    <location>
        <position position="49"/>
    </location>
    <ligand>
        <name>[4Fe-4S] cluster</name>
        <dbReference type="ChEBI" id="CHEBI:49883"/>
        <label>1</label>
        <note>ligand shared between dimeric partners</note>
    </ligand>
</feature>
<feature type="binding site" evidence="3">
    <location>
        <position position="50"/>
    </location>
    <ligand>
        <name>[4Fe-4S] cluster</name>
        <dbReference type="ChEBI" id="CHEBI:49883"/>
        <label>2</label>
    </ligand>
</feature>
<feature type="binding site" evidence="3">
    <location>
        <position position="53"/>
    </location>
    <ligand>
        <name>[4Fe-4S] cluster</name>
        <dbReference type="ChEBI" id="CHEBI:49883"/>
        <label>2</label>
    </ligand>
</feature>
<feature type="binding site" evidence="3">
    <location>
        <position position="58"/>
    </location>
    <ligand>
        <name>[4Fe-4S] cluster</name>
        <dbReference type="ChEBI" id="CHEBI:49883"/>
        <label>2</label>
    </ligand>
</feature>
<feature type="binding site" evidence="3">
    <location>
        <position position="72"/>
    </location>
    <ligand>
        <name>[4Fe-4S] cluster</name>
        <dbReference type="ChEBI" id="CHEBI:49883"/>
        <label>2</label>
    </ligand>
</feature>
<feature type="binding site" evidence="3">
    <location>
        <position position="265"/>
    </location>
    <ligand>
        <name>[Ni-4Fe-4S] cluster</name>
        <dbReference type="ChEBI" id="CHEBI:47739"/>
    </ligand>
</feature>
<feature type="binding site" evidence="3">
    <location>
        <position position="300"/>
    </location>
    <ligand>
        <name>[Ni-4Fe-4S] cluster</name>
        <dbReference type="ChEBI" id="CHEBI:47739"/>
    </ligand>
</feature>
<feature type="binding site" evidence="3">
    <location>
        <position position="338"/>
    </location>
    <ligand>
        <name>[Ni-4Fe-4S] cluster</name>
        <dbReference type="ChEBI" id="CHEBI:47739"/>
    </ligand>
</feature>
<feature type="binding site" evidence="3">
    <location>
        <position position="451"/>
    </location>
    <ligand>
        <name>[Ni-4Fe-4S] cluster</name>
        <dbReference type="ChEBI" id="CHEBI:47739"/>
    </ligand>
</feature>
<feature type="binding site" evidence="3">
    <location>
        <position position="481"/>
    </location>
    <ligand>
        <name>[Ni-4Fe-4S] cluster</name>
        <dbReference type="ChEBI" id="CHEBI:47739"/>
    </ligand>
</feature>
<feature type="binding site" evidence="3">
    <location>
        <position position="531"/>
    </location>
    <ligand>
        <name>[Ni-4Fe-4S] cluster</name>
        <dbReference type="ChEBI" id="CHEBI:47739"/>
    </ligand>
</feature>
<feature type="mutagenesis site" description="Great decrease in activity; diminishes incorporation of nickel. Displays hydroxylamine reductase activity." evidence="6">
    <original>H</original>
    <variation>V</variation>
    <location>
        <position position="265"/>
    </location>
</feature>
<feature type="mutagenesis site" description="Displays hydrogenase activity." evidence="4">
    <original>C</original>
    <variation>A</variation>
    <location>
        <position position="531"/>
    </location>
</feature>
<feature type="helix" evidence="8">
    <location>
        <begin position="30"/>
        <end position="37"/>
    </location>
</feature>
<feature type="helix" evidence="8">
    <location>
        <begin position="42"/>
        <end position="46"/>
    </location>
</feature>
<feature type="strand" evidence="8">
    <location>
        <begin position="62"/>
        <end position="66"/>
    </location>
</feature>
<feature type="helix" evidence="8">
    <location>
        <begin position="76"/>
        <end position="109"/>
    </location>
</feature>
<feature type="turn" evidence="8">
    <location>
        <begin position="110"/>
        <end position="112"/>
    </location>
</feature>
<feature type="helix" evidence="8">
    <location>
        <begin position="122"/>
        <end position="131"/>
    </location>
</feature>
<feature type="turn" evidence="8">
    <location>
        <begin position="137"/>
        <end position="139"/>
    </location>
</feature>
<feature type="helix" evidence="8">
    <location>
        <begin position="141"/>
        <end position="154"/>
    </location>
</feature>
<feature type="turn" evidence="8">
    <location>
        <begin position="155"/>
        <end position="157"/>
    </location>
</feature>
<feature type="helix" evidence="8">
    <location>
        <begin position="166"/>
        <end position="171"/>
    </location>
</feature>
<feature type="helix" evidence="8">
    <location>
        <begin position="174"/>
        <end position="183"/>
    </location>
</feature>
<feature type="helix" evidence="8">
    <location>
        <begin position="190"/>
        <end position="200"/>
    </location>
</feature>
<feature type="helix" evidence="8">
    <location>
        <begin position="209"/>
        <end position="238"/>
    </location>
</feature>
<feature type="strand" evidence="8">
    <location>
        <begin position="244"/>
        <end position="250"/>
    </location>
</feature>
<feature type="strand" evidence="8">
    <location>
        <begin position="257"/>
        <end position="265"/>
    </location>
</feature>
<feature type="helix" evidence="8">
    <location>
        <begin position="267"/>
        <end position="279"/>
    </location>
</feature>
<feature type="turn" evidence="8">
    <location>
        <begin position="280"/>
        <end position="282"/>
    </location>
</feature>
<feature type="helix" evidence="8">
    <location>
        <begin position="283"/>
        <end position="286"/>
    </location>
</feature>
<feature type="strand" evidence="8">
    <location>
        <begin position="292"/>
        <end position="298"/>
    </location>
</feature>
<feature type="helix" evidence="8">
    <location>
        <begin position="299"/>
        <end position="308"/>
    </location>
</feature>
<feature type="strand" evidence="8">
    <location>
        <begin position="313"/>
        <end position="315"/>
    </location>
</feature>
<feature type="turn" evidence="8">
    <location>
        <begin position="318"/>
        <end position="321"/>
    </location>
</feature>
<feature type="helix" evidence="8">
    <location>
        <begin position="322"/>
        <end position="325"/>
    </location>
</feature>
<feature type="strand" evidence="8">
    <location>
        <begin position="331"/>
        <end position="334"/>
    </location>
</feature>
<feature type="strand" evidence="8">
    <location>
        <begin position="336"/>
        <end position="338"/>
    </location>
</feature>
<feature type="helix" evidence="8">
    <location>
        <begin position="343"/>
        <end position="348"/>
    </location>
</feature>
<feature type="strand" evidence="8">
    <location>
        <begin position="353"/>
        <end position="356"/>
    </location>
</feature>
<feature type="strand" evidence="8">
    <location>
        <begin position="366"/>
        <end position="368"/>
    </location>
</feature>
<feature type="helix" evidence="8">
    <location>
        <begin position="373"/>
        <end position="375"/>
    </location>
</feature>
<feature type="helix" evidence="8">
    <location>
        <begin position="376"/>
        <end position="391"/>
    </location>
</feature>
<feature type="strand" evidence="8">
    <location>
        <begin position="406"/>
        <end position="410"/>
    </location>
</feature>
<feature type="helix" evidence="8">
    <location>
        <begin position="414"/>
        <end position="422"/>
    </location>
</feature>
<feature type="helix" evidence="8">
    <location>
        <begin position="430"/>
        <end position="439"/>
    </location>
</feature>
<feature type="strand" evidence="8">
    <location>
        <begin position="440"/>
        <end position="442"/>
    </location>
</feature>
<feature type="strand" evidence="8">
    <location>
        <begin position="444"/>
        <end position="448"/>
    </location>
</feature>
<feature type="helix" evidence="8">
    <location>
        <begin position="460"/>
        <end position="471"/>
    </location>
</feature>
<feature type="strand" evidence="8">
    <location>
        <begin position="474"/>
        <end position="479"/>
    </location>
</feature>
<feature type="helix" evidence="8">
    <location>
        <begin position="480"/>
        <end position="489"/>
    </location>
</feature>
<feature type="helix" evidence="8">
    <location>
        <begin position="494"/>
        <end position="500"/>
    </location>
</feature>
<feature type="helix" evidence="8">
    <location>
        <begin position="503"/>
        <end position="515"/>
    </location>
</feature>
<feature type="strand" evidence="8">
    <location>
        <begin position="518"/>
        <end position="520"/>
    </location>
</feature>
<feature type="strand" evidence="8">
    <location>
        <begin position="524"/>
        <end position="531"/>
    </location>
</feature>
<feature type="helix" evidence="8">
    <location>
        <begin position="534"/>
        <end position="547"/>
    </location>
</feature>
<feature type="turn" evidence="8">
    <location>
        <begin position="552"/>
        <end position="554"/>
    </location>
</feature>
<feature type="strand" evidence="8">
    <location>
        <begin position="555"/>
        <end position="561"/>
    </location>
</feature>
<feature type="helix" evidence="8">
    <location>
        <begin position="567"/>
        <end position="579"/>
    </location>
</feature>
<feature type="strand" evidence="8">
    <location>
        <begin position="582"/>
        <end position="587"/>
    </location>
</feature>
<feature type="turn" evidence="8">
    <location>
        <begin position="590"/>
        <end position="593"/>
    </location>
</feature>
<feature type="helix" evidence="8">
    <location>
        <begin position="595"/>
        <end position="602"/>
    </location>
</feature>
<feature type="helix" evidence="8">
    <location>
        <begin position="604"/>
        <end position="608"/>
    </location>
</feature>
<feature type="strand" evidence="8">
    <location>
        <begin position="612"/>
        <end position="615"/>
    </location>
</feature>
<feature type="helix" evidence="8">
    <location>
        <begin position="619"/>
        <end position="635"/>
    </location>
</feature>
<proteinExistence type="evidence at protein level"/>